<protein>
    <recommendedName>
        <fullName evidence="1">Pyridoxal 5'-phosphate synthase subunit PdxT</fullName>
        <ecNumber evidence="1">4.3.3.6</ecNumber>
    </recommendedName>
    <alternativeName>
        <fullName evidence="1">Pdx2</fullName>
    </alternativeName>
    <alternativeName>
        <fullName evidence="1">Pyridoxal 5'-phosphate synthase glutaminase subunit</fullName>
        <ecNumber evidence="1">3.5.1.2</ecNumber>
    </alternativeName>
</protein>
<accession>Q59055</accession>
<organism>
    <name type="scientific">Methanocaldococcus jannaschii (strain ATCC 43067 / DSM 2661 / JAL-1 / JCM 10045 / NBRC 100440)</name>
    <name type="common">Methanococcus jannaschii</name>
    <dbReference type="NCBI Taxonomy" id="243232"/>
    <lineage>
        <taxon>Archaea</taxon>
        <taxon>Methanobacteriati</taxon>
        <taxon>Methanobacteriota</taxon>
        <taxon>Methanomada group</taxon>
        <taxon>Methanococci</taxon>
        <taxon>Methanococcales</taxon>
        <taxon>Methanocaldococcaceae</taxon>
        <taxon>Methanocaldococcus</taxon>
    </lineage>
</organism>
<keyword id="KW-0002">3D-structure</keyword>
<keyword id="KW-0315">Glutamine amidotransferase</keyword>
<keyword id="KW-0378">Hydrolase</keyword>
<keyword id="KW-0456">Lyase</keyword>
<keyword id="KW-0663">Pyridoxal phosphate</keyword>
<keyword id="KW-1185">Reference proteome</keyword>
<feature type="chain" id="PRO_0000135680" description="Pyridoxal 5'-phosphate synthase subunit PdxT">
    <location>
        <begin position="1"/>
        <end position="186"/>
    </location>
</feature>
<feature type="active site" description="Nucleophile" evidence="1">
    <location>
        <position position="75"/>
    </location>
</feature>
<feature type="active site" description="Charge relay system" evidence="1">
    <location>
        <position position="165"/>
    </location>
</feature>
<feature type="active site" description="Charge relay system" evidence="1">
    <location>
        <position position="167"/>
    </location>
</feature>
<feature type="binding site" evidence="1">
    <location>
        <begin position="46"/>
        <end position="48"/>
    </location>
    <ligand>
        <name>L-glutamine</name>
        <dbReference type="ChEBI" id="CHEBI:58359"/>
    </ligand>
</feature>
<feature type="binding site" evidence="1">
    <location>
        <position position="101"/>
    </location>
    <ligand>
        <name>L-glutamine</name>
        <dbReference type="ChEBI" id="CHEBI:58359"/>
    </ligand>
</feature>
<feature type="binding site" evidence="1">
    <location>
        <begin position="128"/>
        <end position="129"/>
    </location>
    <ligand>
        <name>L-glutamine</name>
        <dbReference type="ChEBI" id="CHEBI:58359"/>
    </ligand>
</feature>
<feature type="strand" evidence="2">
    <location>
        <begin position="2"/>
        <end position="6"/>
    </location>
</feature>
<feature type="strand" evidence="2">
    <location>
        <begin position="8"/>
        <end position="10"/>
    </location>
</feature>
<feature type="helix" evidence="2">
    <location>
        <begin position="13"/>
        <end position="21"/>
    </location>
</feature>
<feature type="strand" evidence="2">
    <location>
        <begin position="24"/>
        <end position="29"/>
    </location>
</feature>
<feature type="helix" evidence="2">
    <location>
        <begin position="32"/>
        <end position="35"/>
    </location>
</feature>
<feature type="strand" evidence="2">
    <location>
        <begin position="39"/>
        <end position="43"/>
    </location>
</feature>
<feature type="helix" evidence="2">
    <location>
        <begin position="48"/>
        <end position="57"/>
    </location>
</feature>
<feature type="helix" evidence="2">
    <location>
        <begin position="60"/>
        <end position="65"/>
    </location>
</feature>
<feature type="strand" evidence="2">
    <location>
        <begin position="71"/>
        <end position="74"/>
    </location>
</feature>
<feature type="helix" evidence="2">
    <location>
        <begin position="76"/>
        <end position="81"/>
    </location>
</feature>
<feature type="strand" evidence="2">
    <location>
        <begin position="95"/>
        <end position="100"/>
    </location>
</feature>
<feature type="turn" evidence="2">
    <location>
        <begin position="101"/>
        <end position="104"/>
    </location>
</feature>
<feature type="strand" evidence="2">
    <location>
        <begin position="106"/>
        <end position="108"/>
    </location>
</feature>
<feature type="strand" evidence="2">
    <location>
        <begin position="111"/>
        <end position="117"/>
    </location>
</feature>
<feature type="turn" evidence="2">
    <location>
        <begin position="118"/>
        <end position="120"/>
    </location>
</feature>
<feature type="strand" evidence="2">
    <location>
        <begin position="121"/>
        <end position="129"/>
    </location>
</feature>
<feature type="strand" evidence="2">
    <location>
        <begin position="132"/>
        <end position="136"/>
    </location>
</feature>
<feature type="strand" evidence="2">
    <location>
        <begin position="142"/>
        <end position="147"/>
    </location>
</feature>
<feature type="strand" evidence="2">
    <location>
        <begin position="150"/>
        <end position="156"/>
    </location>
</feature>
<feature type="strand" evidence="2">
    <location>
        <begin position="159"/>
        <end position="164"/>
    </location>
</feature>
<feature type="helix" evidence="2">
    <location>
        <begin position="166"/>
        <end position="168"/>
    </location>
</feature>
<feature type="helix" evidence="2">
    <location>
        <begin position="172"/>
        <end position="183"/>
    </location>
</feature>
<gene>
    <name evidence="1" type="primary">pdxT</name>
    <name type="ordered locus">MJ1661</name>
</gene>
<reference key="1">
    <citation type="journal article" date="1996" name="Science">
        <title>Complete genome sequence of the methanogenic archaeon, Methanococcus jannaschii.</title>
        <authorList>
            <person name="Bult C.J."/>
            <person name="White O."/>
            <person name="Olsen G.J."/>
            <person name="Zhou L."/>
            <person name="Fleischmann R.D."/>
            <person name="Sutton G.G."/>
            <person name="Blake J.A."/>
            <person name="FitzGerald L.M."/>
            <person name="Clayton R.A."/>
            <person name="Gocayne J.D."/>
            <person name="Kerlavage A.R."/>
            <person name="Dougherty B.A."/>
            <person name="Tomb J.-F."/>
            <person name="Adams M.D."/>
            <person name="Reich C.I."/>
            <person name="Overbeek R."/>
            <person name="Kirkness E.F."/>
            <person name="Weinstock K.G."/>
            <person name="Merrick J.M."/>
            <person name="Glodek A."/>
            <person name="Scott J.L."/>
            <person name="Geoghagen N.S.M."/>
            <person name="Weidman J.F."/>
            <person name="Fuhrmann J.L."/>
            <person name="Nguyen D."/>
            <person name="Utterback T.R."/>
            <person name="Kelley J.M."/>
            <person name="Peterson J.D."/>
            <person name="Sadow P.W."/>
            <person name="Hanna M.C."/>
            <person name="Cotton M.D."/>
            <person name="Roberts K.M."/>
            <person name="Hurst M.A."/>
            <person name="Kaine B.P."/>
            <person name="Borodovsky M."/>
            <person name="Klenk H.-P."/>
            <person name="Fraser C.M."/>
            <person name="Smith H.O."/>
            <person name="Woese C.R."/>
            <person name="Venter J.C."/>
        </authorList>
    </citation>
    <scope>NUCLEOTIDE SEQUENCE [LARGE SCALE GENOMIC DNA]</scope>
    <source>
        <strain>ATCC 43067 / DSM 2661 / JAL-1 / JCM 10045 / NBRC 100440</strain>
    </source>
</reference>
<reference key="2">
    <citation type="submission" date="2007-04" db="PDB data bank">
        <title>Crystal structure of uncharacterized conserved protein from Methanocaldococcus jannaschii.</title>
        <authorList>
            <person name="Manzoku M."/>
            <person name="Ebihara A."/>
            <person name="Yokoyama S."/>
            <person name="Kuramitsu S."/>
        </authorList>
    </citation>
    <scope>X-RAY CRYSTALLOGRAPHY (1.90 ANGSTROMS)</scope>
</reference>
<proteinExistence type="evidence at protein level"/>
<sequence>MIIGVLAIQGDVEEHEEAIKKAGYEAKKVKRVEDLEGIDALIIPGGESTAIGKLMKKYGLLEKIKNSNLPILGTCAGMVLLSKGTGINQILLELMDITVKRNAYGRQVDSFEKEIEFKDLGKVYGVFIRAPVVDKILSDDVEVIARDGDKIVGVKQGKYMALSFHPELSEDGYKVYKYFVENCVKK</sequence>
<comment type="function">
    <text evidence="1">Catalyzes the hydrolysis of glutamine to glutamate and ammonia as part of the biosynthesis of pyridoxal 5'-phosphate. The resulting ammonia molecule is channeled to the active site of PdxS.</text>
</comment>
<comment type="catalytic activity">
    <reaction evidence="1">
        <text>aldehydo-D-ribose 5-phosphate + D-glyceraldehyde 3-phosphate + L-glutamine = pyridoxal 5'-phosphate + L-glutamate + phosphate + 3 H2O + H(+)</text>
        <dbReference type="Rhea" id="RHEA:31507"/>
        <dbReference type="ChEBI" id="CHEBI:15377"/>
        <dbReference type="ChEBI" id="CHEBI:15378"/>
        <dbReference type="ChEBI" id="CHEBI:29985"/>
        <dbReference type="ChEBI" id="CHEBI:43474"/>
        <dbReference type="ChEBI" id="CHEBI:58273"/>
        <dbReference type="ChEBI" id="CHEBI:58359"/>
        <dbReference type="ChEBI" id="CHEBI:59776"/>
        <dbReference type="ChEBI" id="CHEBI:597326"/>
        <dbReference type="EC" id="4.3.3.6"/>
    </reaction>
</comment>
<comment type="catalytic activity">
    <reaction evidence="1">
        <text>L-glutamine + H2O = L-glutamate + NH4(+)</text>
        <dbReference type="Rhea" id="RHEA:15889"/>
        <dbReference type="ChEBI" id="CHEBI:15377"/>
        <dbReference type="ChEBI" id="CHEBI:28938"/>
        <dbReference type="ChEBI" id="CHEBI:29985"/>
        <dbReference type="ChEBI" id="CHEBI:58359"/>
        <dbReference type="EC" id="3.5.1.2"/>
    </reaction>
</comment>
<comment type="pathway">
    <text evidence="1">Cofactor biosynthesis; pyridoxal 5'-phosphate biosynthesis.</text>
</comment>
<comment type="subunit">
    <text evidence="1">In the presence of PdxS, forms a dodecamer of heterodimers. Only shows activity in the heterodimer.</text>
</comment>
<comment type="similarity">
    <text evidence="1">Belongs to the glutaminase PdxT/SNO family.</text>
</comment>
<dbReference type="EC" id="4.3.3.6" evidence="1"/>
<dbReference type="EC" id="3.5.1.2" evidence="1"/>
<dbReference type="EMBL" id="L77117">
    <property type="protein sequence ID" value="AAB99679.1"/>
    <property type="molecule type" value="Genomic_DNA"/>
</dbReference>
<dbReference type="PIR" id="C64507">
    <property type="entry name" value="C64507"/>
</dbReference>
<dbReference type="RefSeq" id="WP_010871185.1">
    <property type="nucleotide sequence ID" value="NC_000909.1"/>
</dbReference>
<dbReference type="PDB" id="2YWJ">
    <property type="method" value="X-ray"/>
    <property type="resolution" value="1.90 A"/>
    <property type="chains" value="A=1-186"/>
</dbReference>
<dbReference type="PDBsum" id="2YWJ"/>
<dbReference type="SMR" id="Q59055"/>
<dbReference type="FunCoup" id="Q59055">
    <property type="interactions" value="143"/>
</dbReference>
<dbReference type="STRING" id="243232.MJ_1661"/>
<dbReference type="PaxDb" id="243232-MJ_1661"/>
<dbReference type="EnsemblBacteria" id="AAB99679">
    <property type="protein sequence ID" value="AAB99679"/>
    <property type="gene ID" value="MJ_1661"/>
</dbReference>
<dbReference type="GeneID" id="1452570"/>
<dbReference type="KEGG" id="mja:MJ_1661"/>
<dbReference type="eggNOG" id="arCOG00034">
    <property type="taxonomic scope" value="Archaea"/>
</dbReference>
<dbReference type="HOGENOM" id="CLU_069674_2_0_2"/>
<dbReference type="InParanoid" id="Q59055"/>
<dbReference type="OrthoDB" id="26717at2157"/>
<dbReference type="PhylomeDB" id="Q59055"/>
<dbReference type="UniPathway" id="UPA00245"/>
<dbReference type="EvolutionaryTrace" id="Q59055"/>
<dbReference type="Proteomes" id="UP000000805">
    <property type="component" value="Chromosome"/>
</dbReference>
<dbReference type="GO" id="GO:0005829">
    <property type="term" value="C:cytosol"/>
    <property type="evidence" value="ECO:0000318"/>
    <property type="project" value="GO_Central"/>
</dbReference>
<dbReference type="GO" id="GO:1903600">
    <property type="term" value="C:glutaminase complex"/>
    <property type="evidence" value="ECO:0000318"/>
    <property type="project" value="GO_Central"/>
</dbReference>
<dbReference type="GO" id="GO:0004359">
    <property type="term" value="F:glutaminase activity"/>
    <property type="evidence" value="ECO:0007669"/>
    <property type="project" value="UniProtKB-UniRule"/>
</dbReference>
<dbReference type="GO" id="GO:0036381">
    <property type="term" value="F:pyridoxal 5'-phosphate synthase (glutamine hydrolysing) activity"/>
    <property type="evidence" value="ECO:0007669"/>
    <property type="project" value="UniProtKB-UniRule"/>
</dbReference>
<dbReference type="GO" id="GO:0006543">
    <property type="term" value="P:glutamine catabolic process"/>
    <property type="evidence" value="ECO:0007669"/>
    <property type="project" value="UniProtKB-UniRule"/>
</dbReference>
<dbReference type="GO" id="GO:0042823">
    <property type="term" value="P:pyridoxal phosphate biosynthetic process"/>
    <property type="evidence" value="ECO:0000318"/>
    <property type="project" value="GO_Central"/>
</dbReference>
<dbReference type="GO" id="GO:0008614">
    <property type="term" value="P:pyridoxine metabolic process"/>
    <property type="evidence" value="ECO:0000318"/>
    <property type="project" value="GO_Central"/>
</dbReference>
<dbReference type="CDD" id="cd01749">
    <property type="entry name" value="GATase1_PB"/>
    <property type="match status" value="1"/>
</dbReference>
<dbReference type="FunFam" id="3.40.50.880:FF:000010">
    <property type="entry name" value="uncharacterized protein LOC100176842 isoform X2"/>
    <property type="match status" value="1"/>
</dbReference>
<dbReference type="Gene3D" id="3.40.50.880">
    <property type="match status" value="1"/>
</dbReference>
<dbReference type="HAMAP" id="MF_01615">
    <property type="entry name" value="PdxT"/>
    <property type="match status" value="1"/>
</dbReference>
<dbReference type="InterPro" id="IPR029062">
    <property type="entry name" value="Class_I_gatase-like"/>
</dbReference>
<dbReference type="InterPro" id="IPR002161">
    <property type="entry name" value="PdxT/SNO"/>
</dbReference>
<dbReference type="InterPro" id="IPR021196">
    <property type="entry name" value="PdxT/SNO_CS"/>
</dbReference>
<dbReference type="NCBIfam" id="TIGR03800">
    <property type="entry name" value="PLP_synth_Pdx2"/>
    <property type="match status" value="1"/>
</dbReference>
<dbReference type="PANTHER" id="PTHR31559">
    <property type="entry name" value="PYRIDOXAL 5'-PHOSPHATE SYNTHASE SUBUNIT SNO"/>
    <property type="match status" value="1"/>
</dbReference>
<dbReference type="PANTHER" id="PTHR31559:SF0">
    <property type="entry name" value="PYRIDOXAL 5'-PHOSPHATE SYNTHASE SUBUNIT SNO1-RELATED"/>
    <property type="match status" value="1"/>
</dbReference>
<dbReference type="Pfam" id="PF01174">
    <property type="entry name" value="SNO"/>
    <property type="match status" value="1"/>
</dbReference>
<dbReference type="PIRSF" id="PIRSF005639">
    <property type="entry name" value="Glut_amidoT_SNO"/>
    <property type="match status" value="1"/>
</dbReference>
<dbReference type="SUPFAM" id="SSF52317">
    <property type="entry name" value="Class I glutamine amidotransferase-like"/>
    <property type="match status" value="1"/>
</dbReference>
<dbReference type="PROSITE" id="PS01236">
    <property type="entry name" value="PDXT_SNO_1"/>
    <property type="match status" value="1"/>
</dbReference>
<dbReference type="PROSITE" id="PS51130">
    <property type="entry name" value="PDXT_SNO_2"/>
    <property type="match status" value="1"/>
</dbReference>
<evidence type="ECO:0000255" key="1">
    <source>
        <dbReference type="HAMAP-Rule" id="MF_01615"/>
    </source>
</evidence>
<evidence type="ECO:0007829" key="2">
    <source>
        <dbReference type="PDB" id="2YWJ"/>
    </source>
</evidence>
<name>PDXT_METJA</name>